<comment type="function">
    <text evidence="1">An essential GTPase which binds GTP, GDP and possibly (p)ppGpp with moderate affinity, with high nucleotide exchange rates and a fairly low GTP hydrolysis rate. Plays a role in control of the cell cycle, stress response, ribosome biogenesis and in those bacteria that undergo differentiation, in morphogenesis control.</text>
</comment>
<comment type="cofactor">
    <cofactor evidence="1">
        <name>Mg(2+)</name>
        <dbReference type="ChEBI" id="CHEBI:18420"/>
    </cofactor>
</comment>
<comment type="subunit">
    <text evidence="1">Monomer.</text>
</comment>
<comment type="subcellular location">
    <subcellularLocation>
        <location evidence="1">Cytoplasm</location>
    </subcellularLocation>
</comment>
<comment type="similarity">
    <text evidence="1">Belongs to the TRAFAC class OBG-HflX-like GTPase superfamily. OBG GTPase family.</text>
</comment>
<accession>A0ZZZ0</accession>
<evidence type="ECO:0000255" key="1">
    <source>
        <dbReference type="HAMAP-Rule" id="MF_01454"/>
    </source>
</evidence>
<evidence type="ECO:0000255" key="2">
    <source>
        <dbReference type="PROSITE-ProRule" id="PRU01229"/>
    </source>
</evidence>
<evidence type="ECO:0000255" key="3">
    <source>
        <dbReference type="PROSITE-ProRule" id="PRU01231"/>
    </source>
</evidence>
<evidence type="ECO:0000256" key="4">
    <source>
        <dbReference type="SAM" id="MobiDB-lite"/>
    </source>
</evidence>
<sequence length="563" mass="61158">MSDFVDRVTVHVKGGDGGNGSAGIRREKYKPLAGPNGGNGGDGGSVIFMADSNANSLLDYRFMPHREAESGTMGLGDTKDGSKGADLILPVPVGTVVFEAKGPQGKPKHPGEQLADLRHAGDKFVVAAGGNGGLGNAALANRTRRAPGFALLGEPGEERDVILELKSIADVALVGFPSAGKSSLIAAMSSAKPKIADYPFTTLVPNLGVVVAGDMRYTIADVPGLIPGASQGKGLGLEFLRHIERTEIIAHVIDCATLEPGRDPMSDYQALEHELAEYAGKLELPLGAIPIPERPRIIILNKVDVPEAKELAEFVKPEFEKLGLKVHIISTASHEGLKELNWALADLVTNMRAEVAKREQAEEEARVVIKPLEEPRNRRRRNDEGGNALDFTVERKENGNGEVWYEVLGTKPERWVMQTNFDNDEAVGYLADRLAKLGVEDELRHKGAKPGDEVRIGRGDRAVEFDWDPTIAAGAEMLDGTQLGARGVDLRLQESDGRAQRRSNTERRRQYHEMMDARQAVREAMMAERKAGHWADPSVDDDRHDETSLFGRGETADDEDVEQ</sequence>
<dbReference type="EC" id="3.6.5.-" evidence="1"/>
<dbReference type="EMBL" id="AP009256">
    <property type="protein sequence ID" value="BAF39023.1"/>
    <property type="molecule type" value="Genomic_DNA"/>
</dbReference>
<dbReference type="SMR" id="A0ZZZ0"/>
<dbReference type="STRING" id="367928.BAD_0242"/>
<dbReference type="PaxDb" id="1680-BADO_0251"/>
<dbReference type="GeneID" id="4556335"/>
<dbReference type="KEGG" id="bad:BAD_0242"/>
<dbReference type="HOGENOM" id="CLU_011747_1_0_11"/>
<dbReference type="Proteomes" id="UP000008702">
    <property type="component" value="Chromosome"/>
</dbReference>
<dbReference type="GO" id="GO:0005737">
    <property type="term" value="C:cytoplasm"/>
    <property type="evidence" value="ECO:0007669"/>
    <property type="project" value="UniProtKB-SubCell"/>
</dbReference>
<dbReference type="GO" id="GO:0005525">
    <property type="term" value="F:GTP binding"/>
    <property type="evidence" value="ECO:0007669"/>
    <property type="project" value="UniProtKB-UniRule"/>
</dbReference>
<dbReference type="GO" id="GO:0003924">
    <property type="term" value="F:GTPase activity"/>
    <property type="evidence" value="ECO:0007669"/>
    <property type="project" value="UniProtKB-UniRule"/>
</dbReference>
<dbReference type="GO" id="GO:0000287">
    <property type="term" value="F:magnesium ion binding"/>
    <property type="evidence" value="ECO:0007669"/>
    <property type="project" value="InterPro"/>
</dbReference>
<dbReference type="GO" id="GO:0042254">
    <property type="term" value="P:ribosome biogenesis"/>
    <property type="evidence" value="ECO:0007669"/>
    <property type="project" value="UniProtKB-UniRule"/>
</dbReference>
<dbReference type="CDD" id="cd01898">
    <property type="entry name" value="Obg"/>
    <property type="match status" value="1"/>
</dbReference>
<dbReference type="FunFam" id="2.70.210.12:FF:000001">
    <property type="entry name" value="GTPase Obg"/>
    <property type="match status" value="1"/>
</dbReference>
<dbReference type="Gene3D" id="3.30.300.350">
    <property type="entry name" value="GTP-binding protein OBG, C-terminal domain"/>
    <property type="match status" value="1"/>
</dbReference>
<dbReference type="Gene3D" id="2.70.210.12">
    <property type="entry name" value="GTP1/OBG domain"/>
    <property type="match status" value="1"/>
</dbReference>
<dbReference type="Gene3D" id="3.40.50.300">
    <property type="entry name" value="P-loop containing nucleotide triphosphate hydrolases"/>
    <property type="match status" value="1"/>
</dbReference>
<dbReference type="HAMAP" id="MF_01454">
    <property type="entry name" value="GTPase_Obg"/>
    <property type="match status" value="1"/>
</dbReference>
<dbReference type="InterPro" id="IPR031167">
    <property type="entry name" value="G_OBG"/>
</dbReference>
<dbReference type="InterPro" id="IPR006073">
    <property type="entry name" value="GTP-bd"/>
</dbReference>
<dbReference type="InterPro" id="IPR014100">
    <property type="entry name" value="GTP-bd_Obg/CgtA"/>
</dbReference>
<dbReference type="InterPro" id="IPR036346">
    <property type="entry name" value="GTP-bd_prot_GTP1/OBG_C_sf"/>
</dbReference>
<dbReference type="InterPro" id="IPR006074">
    <property type="entry name" value="GTP1-OBG_CS"/>
</dbReference>
<dbReference type="InterPro" id="IPR006169">
    <property type="entry name" value="GTP1_OBG_dom"/>
</dbReference>
<dbReference type="InterPro" id="IPR036726">
    <property type="entry name" value="GTP1_OBG_dom_sf"/>
</dbReference>
<dbReference type="InterPro" id="IPR045086">
    <property type="entry name" value="OBG_GTPase"/>
</dbReference>
<dbReference type="InterPro" id="IPR015349">
    <property type="entry name" value="OCT_dom"/>
</dbReference>
<dbReference type="InterPro" id="IPR027417">
    <property type="entry name" value="P-loop_NTPase"/>
</dbReference>
<dbReference type="NCBIfam" id="TIGR02729">
    <property type="entry name" value="Obg_CgtA"/>
    <property type="match status" value="1"/>
</dbReference>
<dbReference type="NCBIfam" id="TIGR03595">
    <property type="entry name" value="Obg_CgtA_exten"/>
    <property type="match status" value="1"/>
</dbReference>
<dbReference type="NCBIfam" id="NF008954">
    <property type="entry name" value="PRK12296.1"/>
    <property type="match status" value="1"/>
</dbReference>
<dbReference type="NCBIfam" id="NF008955">
    <property type="entry name" value="PRK12297.1"/>
    <property type="match status" value="1"/>
</dbReference>
<dbReference type="NCBIfam" id="NF008956">
    <property type="entry name" value="PRK12299.1"/>
    <property type="match status" value="1"/>
</dbReference>
<dbReference type="PANTHER" id="PTHR11702">
    <property type="entry name" value="DEVELOPMENTALLY REGULATED GTP-BINDING PROTEIN-RELATED"/>
    <property type="match status" value="1"/>
</dbReference>
<dbReference type="PANTHER" id="PTHR11702:SF31">
    <property type="entry name" value="MITOCHONDRIAL RIBOSOME-ASSOCIATED GTPASE 2"/>
    <property type="match status" value="1"/>
</dbReference>
<dbReference type="Pfam" id="PF09269">
    <property type="entry name" value="DUF1967"/>
    <property type="match status" value="1"/>
</dbReference>
<dbReference type="Pfam" id="PF01018">
    <property type="entry name" value="GTP1_OBG"/>
    <property type="match status" value="1"/>
</dbReference>
<dbReference type="Pfam" id="PF01926">
    <property type="entry name" value="MMR_HSR1"/>
    <property type="match status" value="1"/>
</dbReference>
<dbReference type="PRINTS" id="PR00326">
    <property type="entry name" value="GTP1OBG"/>
</dbReference>
<dbReference type="SUPFAM" id="SSF102741">
    <property type="entry name" value="Obg GTP-binding protein C-terminal domain"/>
    <property type="match status" value="1"/>
</dbReference>
<dbReference type="SUPFAM" id="SSF82051">
    <property type="entry name" value="Obg GTP-binding protein N-terminal domain"/>
    <property type="match status" value="1"/>
</dbReference>
<dbReference type="SUPFAM" id="SSF52540">
    <property type="entry name" value="P-loop containing nucleoside triphosphate hydrolases"/>
    <property type="match status" value="1"/>
</dbReference>
<dbReference type="PROSITE" id="PS51710">
    <property type="entry name" value="G_OBG"/>
    <property type="match status" value="1"/>
</dbReference>
<dbReference type="PROSITE" id="PS00905">
    <property type="entry name" value="GTP1_OBG"/>
    <property type="match status" value="1"/>
</dbReference>
<dbReference type="PROSITE" id="PS51883">
    <property type="entry name" value="OBG"/>
    <property type="match status" value="1"/>
</dbReference>
<dbReference type="PROSITE" id="PS51881">
    <property type="entry name" value="OCT"/>
    <property type="match status" value="1"/>
</dbReference>
<gene>
    <name evidence="1" type="primary">obg</name>
    <name type="ordered locus">BAD_0242</name>
</gene>
<reference key="1">
    <citation type="submission" date="2006-12" db="EMBL/GenBank/DDBJ databases">
        <title>Bifidobacterium adolescentis complete genome sequence.</title>
        <authorList>
            <person name="Suzuki T."/>
            <person name="Tsuda Y."/>
            <person name="Kanou N."/>
            <person name="Inoue T."/>
            <person name="Kumazaki K."/>
            <person name="Nagano S."/>
            <person name="Hirai S."/>
            <person name="Tanaka K."/>
            <person name="Watanabe K."/>
        </authorList>
    </citation>
    <scope>NUCLEOTIDE SEQUENCE [LARGE SCALE GENOMIC DNA]</scope>
    <source>
        <strain>ATCC 15703 / DSM 20083 / NCTC 11814 / E194a</strain>
    </source>
</reference>
<name>OBG_BIFAA</name>
<organism>
    <name type="scientific">Bifidobacterium adolescentis (strain ATCC 15703 / DSM 20083 / NCTC 11814 / E194a)</name>
    <dbReference type="NCBI Taxonomy" id="367928"/>
    <lineage>
        <taxon>Bacteria</taxon>
        <taxon>Bacillati</taxon>
        <taxon>Actinomycetota</taxon>
        <taxon>Actinomycetes</taxon>
        <taxon>Bifidobacteriales</taxon>
        <taxon>Bifidobacteriaceae</taxon>
        <taxon>Bifidobacterium</taxon>
    </lineage>
</organism>
<feature type="chain" id="PRO_0000385742" description="GTPase Obg">
    <location>
        <begin position="1"/>
        <end position="563"/>
    </location>
</feature>
<feature type="domain" description="Obg" evidence="3">
    <location>
        <begin position="2"/>
        <end position="168"/>
    </location>
</feature>
<feature type="domain" description="OBG-type G" evidence="1">
    <location>
        <begin position="169"/>
        <end position="349"/>
    </location>
</feature>
<feature type="domain" description="OCT" evidence="2">
    <location>
        <begin position="383"/>
        <end position="469"/>
    </location>
</feature>
<feature type="region of interest" description="Disordered" evidence="4">
    <location>
        <begin position="525"/>
        <end position="563"/>
    </location>
</feature>
<feature type="binding site" evidence="1">
    <location>
        <begin position="175"/>
        <end position="182"/>
    </location>
    <ligand>
        <name>GTP</name>
        <dbReference type="ChEBI" id="CHEBI:37565"/>
    </ligand>
</feature>
<feature type="binding site" evidence="1">
    <location>
        <position position="182"/>
    </location>
    <ligand>
        <name>Mg(2+)</name>
        <dbReference type="ChEBI" id="CHEBI:18420"/>
    </ligand>
</feature>
<feature type="binding site" evidence="1">
    <location>
        <begin position="200"/>
        <end position="204"/>
    </location>
    <ligand>
        <name>GTP</name>
        <dbReference type="ChEBI" id="CHEBI:37565"/>
    </ligand>
</feature>
<feature type="binding site" evidence="1">
    <location>
        <position position="202"/>
    </location>
    <ligand>
        <name>Mg(2+)</name>
        <dbReference type="ChEBI" id="CHEBI:18420"/>
    </ligand>
</feature>
<feature type="binding site" evidence="1">
    <location>
        <begin position="221"/>
        <end position="224"/>
    </location>
    <ligand>
        <name>GTP</name>
        <dbReference type="ChEBI" id="CHEBI:37565"/>
    </ligand>
</feature>
<feature type="binding site" evidence="1">
    <location>
        <begin position="301"/>
        <end position="304"/>
    </location>
    <ligand>
        <name>GTP</name>
        <dbReference type="ChEBI" id="CHEBI:37565"/>
    </ligand>
</feature>
<feature type="binding site" evidence="1">
    <location>
        <begin position="330"/>
        <end position="332"/>
    </location>
    <ligand>
        <name>GTP</name>
        <dbReference type="ChEBI" id="CHEBI:37565"/>
    </ligand>
</feature>
<keyword id="KW-0963">Cytoplasm</keyword>
<keyword id="KW-0342">GTP-binding</keyword>
<keyword id="KW-0378">Hydrolase</keyword>
<keyword id="KW-0460">Magnesium</keyword>
<keyword id="KW-0479">Metal-binding</keyword>
<keyword id="KW-0547">Nucleotide-binding</keyword>
<keyword id="KW-1185">Reference proteome</keyword>
<protein>
    <recommendedName>
        <fullName evidence="1">GTPase Obg</fullName>
        <ecNumber evidence="1">3.6.5.-</ecNumber>
    </recommendedName>
    <alternativeName>
        <fullName evidence="1">GTP-binding protein Obg</fullName>
    </alternativeName>
</protein>
<proteinExistence type="inferred from homology"/>